<sequence>RGVCSTPEGSCVHNGCICQNAPCCHPSGCNWANVCPGYLWDKN</sequence>
<feature type="propeptide" id="PRO_0000392283" evidence="1">
    <location>
        <begin position="1" status="less than"/>
        <end position="1"/>
    </location>
</feature>
<feature type="peptide" id="PRO_0000392284" description="Mu-conotoxin-like Cal 12.2c">
    <location>
        <begin position="2"/>
        <end position="43"/>
    </location>
</feature>
<feature type="modified residue" description="6'-bromotryptophan" evidence="1">
    <location>
        <position position="31"/>
    </location>
</feature>
<feature type="modified residue" description="4-hydroxyproline" evidence="1">
    <location>
        <position position="36"/>
    </location>
</feature>
<feature type="modified residue" description="6'-bromotryptophan" evidence="1">
    <location>
        <position position="40"/>
    </location>
</feature>
<feature type="disulfide bond" evidence="2">
    <location>
        <begin position="4"/>
        <end position="16"/>
    </location>
</feature>
<feature type="disulfide bond" evidence="1">
    <location>
        <begin position="11"/>
        <end position="24"/>
    </location>
</feature>
<feature type="disulfide bond" evidence="1">
    <location>
        <begin position="18"/>
        <end position="29"/>
    </location>
</feature>
<feature type="disulfide bond" evidence="1">
    <location>
        <begin position="23"/>
        <end position="35"/>
    </location>
</feature>
<feature type="non-terminal residue">
    <location>
        <position position="1"/>
    </location>
</feature>
<protein>
    <recommendedName>
        <fullName>Mu-conotoxin-like Cal 12.2c</fullName>
    </recommendedName>
    <alternativeName>
        <fullName>Conotoxin CalTx 12.2.1C</fullName>
    </alternativeName>
</protein>
<name>COCC_CONCL</name>
<keyword id="KW-0102">Bromination</keyword>
<keyword id="KW-1015">Disulfide bond</keyword>
<keyword id="KW-0379">Hydroxylation</keyword>
<keyword id="KW-0872">Ion channel impairing toxin</keyword>
<keyword id="KW-0528">Neurotoxin</keyword>
<keyword id="KW-0964">Secreted</keyword>
<keyword id="KW-0800">Toxin</keyword>
<proteinExistence type="evidence at transcript level"/>
<evidence type="ECO:0000250" key="1"/>
<evidence type="ECO:0000305" key="2"/>
<dbReference type="EMBL" id="EU022529">
    <property type="protein sequence ID" value="ABS59786.1"/>
    <property type="molecule type" value="mRNA"/>
</dbReference>
<dbReference type="ConoServer" id="818">
    <property type="toxin name" value="Cal12.2c"/>
</dbReference>
<dbReference type="GO" id="GO:0005576">
    <property type="term" value="C:extracellular region"/>
    <property type="evidence" value="ECO:0007669"/>
    <property type="project" value="UniProtKB-SubCell"/>
</dbReference>
<dbReference type="GO" id="GO:0099106">
    <property type="term" value="F:ion channel regulator activity"/>
    <property type="evidence" value="ECO:0007669"/>
    <property type="project" value="UniProtKB-KW"/>
</dbReference>
<dbReference type="GO" id="GO:0090729">
    <property type="term" value="F:toxin activity"/>
    <property type="evidence" value="ECO:0007669"/>
    <property type="project" value="UniProtKB-KW"/>
</dbReference>
<reference key="1">
    <citation type="journal article" date="2011" name="J. Exp. Biol.">
        <title>A diverse family of novel peptide toxins from an unusual cone snail, Conus californicus.</title>
        <authorList>
            <person name="Gilly W.F."/>
            <person name="Richmond T.A."/>
            <person name="Duda T.F. Jr."/>
            <person name="Elliger C."/>
            <person name="Lebaric Z."/>
            <person name="Schulz J."/>
            <person name="Bingham J.P."/>
            <person name="Sweedler J.V."/>
        </authorList>
    </citation>
    <scope>NUCLEOTIDE SEQUENCE [MRNA]</scope>
    <source>
        <tissue>Venom duct</tissue>
    </source>
</reference>
<accession>A7LI91</accession>
<organism>
    <name type="scientific">Californiconus californicus</name>
    <name type="common">California cone</name>
    <name type="synonym">Conus californicus</name>
    <dbReference type="NCBI Taxonomy" id="1736779"/>
    <lineage>
        <taxon>Eukaryota</taxon>
        <taxon>Metazoa</taxon>
        <taxon>Spiralia</taxon>
        <taxon>Lophotrochozoa</taxon>
        <taxon>Mollusca</taxon>
        <taxon>Gastropoda</taxon>
        <taxon>Caenogastropoda</taxon>
        <taxon>Neogastropoda</taxon>
        <taxon>Conoidea</taxon>
        <taxon>Conidae</taxon>
        <taxon>Californiconus</taxon>
    </lineage>
</organism>
<comment type="function">
    <text evidence="1">Mu-conotoxins block voltage-gated sodium channels. This toxin reversibly blocks voltage-gated sodium channel in cephalopods, with no alteration in the voltage dependence of sodium conductance or on the kinetics of inactivation (By similarity).</text>
</comment>
<comment type="subcellular location">
    <subcellularLocation>
        <location evidence="1">Secreted</location>
    </subcellularLocation>
</comment>
<comment type="tissue specificity">
    <text>Expressed by the venom duct.</text>
</comment>
<comment type="domain">
    <text>The cysteine framework is XII (C-C-C-C-CC-C-C).</text>
</comment>